<accession>B7HL82</accession>
<dbReference type="EC" id="2.4.2.22" evidence="1"/>
<dbReference type="EMBL" id="CP001177">
    <property type="protein sequence ID" value="ACJ79115.1"/>
    <property type="molecule type" value="Genomic_DNA"/>
</dbReference>
<dbReference type="SMR" id="B7HL82"/>
<dbReference type="KEGG" id="bcr:BCAH187_A1737"/>
<dbReference type="HOGENOM" id="CLU_099015_0_0_9"/>
<dbReference type="UniPathway" id="UPA00602">
    <property type="reaction ID" value="UER00658"/>
</dbReference>
<dbReference type="Proteomes" id="UP000002214">
    <property type="component" value="Chromosome"/>
</dbReference>
<dbReference type="GO" id="GO:0005737">
    <property type="term" value="C:cytoplasm"/>
    <property type="evidence" value="ECO:0007669"/>
    <property type="project" value="UniProtKB-SubCell"/>
</dbReference>
<dbReference type="GO" id="GO:0000310">
    <property type="term" value="F:xanthine phosphoribosyltransferase activity"/>
    <property type="evidence" value="ECO:0007669"/>
    <property type="project" value="UniProtKB-UniRule"/>
</dbReference>
<dbReference type="GO" id="GO:0006166">
    <property type="term" value="P:purine ribonucleoside salvage"/>
    <property type="evidence" value="ECO:0007669"/>
    <property type="project" value="UniProtKB-KW"/>
</dbReference>
<dbReference type="GO" id="GO:0046110">
    <property type="term" value="P:xanthine metabolic process"/>
    <property type="evidence" value="ECO:0007669"/>
    <property type="project" value="InterPro"/>
</dbReference>
<dbReference type="GO" id="GO:0032265">
    <property type="term" value="P:XMP salvage"/>
    <property type="evidence" value="ECO:0007669"/>
    <property type="project" value="UniProtKB-UniRule"/>
</dbReference>
<dbReference type="CDD" id="cd06223">
    <property type="entry name" value="PRTases_typeI"/>
    <property type="match status" value="1"/>
</dbReference>
<dbReference type="Gene3D" id="3.40.50.2020">
    <property type="match status" value="1"/>
</dbReference>
<dbReference type="HAMAP" id="MF_01184">
    <property type="entry name" value="XPRTase"/>
    <property type="match status" value="1"/>
</dbReference>
<dbReference type="InterPro" id="IPR000836">
    <property type="entry name" value="PRibTrfase_dom"/>
</dbReference>
<dbReference type="InterPro" id="IPR029057">
    <property type="entry name" value="PRTase-like"/>
</dbReference>
<dbReference type="InterPro" id="IPR050118">
    <property type="entry name" value="Pur/Pyrimidine_PRTase"/>
</dbReference>
<dbReference type="InterPro" id="IPR010079">
    <property type="entry name" value="Xanthine_PRibTrfase"/>
</dbReference>
<dbReference type="NCBIfam" id="NF006671">
    <property type="entry name" value="PRK09219.1"/>
    <property type="match status" value="1"/>
</dbReference>
<dbReference type="NCBIfam" id="TIGR01744">
    <property type="entry name" value="XPRTase"/>
    <property type="match status" value="1"/>
</dbReference>
<dbReference type="PANTHER" id="PTHR43864">
    <property type="entry name" value="HYPOXANTHINE/GUANINE PHOSPHORIBOSYLTRANSFERASE"/>
    <property type="match status" value="1"/>
</dbReference>
<dbReference type="PANTHER" id="PTHR43864:SF1">
    <property type="entry name" value="XANTHINE PHOSPHORIBOSYLTRANSFERASE"/>
    <property type="match status" value="1"/>
</dbReference>
<dbReference type="Pfam" id="PF00156">
    <property type="entry name" value="Pribosyltran"/>
    <property type="match status" value="1"/>
</dbReference>
<dbReference type="SUPFAM" id="SSF53271">
    <property type="entry name" value="PRTase-like"/>
    <property type="match status" value="1"/>
</dbReference>
<reference key="1">
    <citation type="submission" date="2008-10" db="EMBL/GenBank/DDBJ databases">
        <title>Genome sequence of Bacillus cereus AH187.</title>
        <authorList>
            <person name="Dodson R.J."/>
            <person name="Durkin A.S."/>
            <person name="Rosovitz M.J."/>
            <person name="Rasko D.A."/>
            <person name="Kolsto A.B."/>
            <person name="Okstad O.A."/>
            <person name="Ravel J."/>
            <person name="Sutton G."/>
        </authorList>
    </citation>
    <scope>NUCLEOTIDE SEQUENCE [LARGE SCALE GENOMIC DNA]</scope>
    <source>
        <strain>AH187</strain>
    </source>
</reference>
<gene>
    <name evidence="1" type="primary">xpt</name>
    <name type="ordered locus">BCAH187_A1737</name>
</gene>
<name>XPT_BACC7</name>
<evidence type="ECO:0000255" key="1">
    <source>
        <dbReference type="HAMAP-Rule" id="MF_01184"/>
    </source>
</evidence>
<keyword id="KW-0963">Cytoplasm</keyword>
<keyword id="KW-0328">Glycosyltransferase</keyword>
<keyword id="KW-0660">Purine salvage</keyword>
<keyword id="KW-0808">Transferase</keyword>
<comment type="function">
    <text evidence="1">Converts the preformed base xanthine, a product of nucleic acid breakdown, to xanthosine 5'-monophosphate (XMP), so it can be reused for RNA or DNA synthesis.</text>
</comment>
<comment type="catalytic activity">
    <reaction evidence="1">
        <text>XMP + diphosphate = xanthine + 5-phospho-alpha-D-ribose 1-diphosphate</text>
        <dbReference type="Rhea" id="RHEA:10800"/>
        <dbReference type="ChEBI" id="CHEBI:17712"/>
        <dbReference type="ChEBI" id="CHEBI:33019"/>
        <dbReference type="ChEBI" id="CHEBI:57464"/>
        <dbReference type="ChEBI" id="CHEBI:58017"/>
        <dbReference type="EC" id="2.4.2.22"/>
    </reaction>
</comment>
<comment type="pathway">
    <text evidence="1">Purine metabolism; XMP biosynthesis via salvage pathway; XMP from xanthine: step 1/1.</text>
</comment>
<comment type="subunit">
    <text evidence="1">Homodimer.</text>
</comment>
<comment type="subcellular location">
    <subcellularLocation>
        <location evidence="1">Cytoplasm</location>
    </subcellularLocation>
</comment>
<comment type="similarity">
    <text evidence="1">Belongs to the purine/pyrimidine phosphoribosyltransferase family. Xpt subfamily.</text>
</comment>
<feature type="chain" id="PRO_1000138232" description="Xanthine phosphoribosyltransferase">
    <location>
        <begin position="1"/>
        <end position="197"/>
    </location>
</feature>
<feature type="binding site" evidence="1">
    <location>
        <position position="20"/>
    </location>
    <ligand>
        <name>xanthine</name>
        <dbReference type="ChEBI" id="CHEBI:17712"/>
    </ligand>
</feature>
<feature type="binding site" evidence="1">
    <location>
        <position position="27"/>
    </location>
    <ligand>
        <name>xanthine</name>
        <dbReference type="ChEBI" id="CHEBI:17712"/>
    </ligand>
</feature>
<feature type="binding site" evidence="1">
    <location>
        <begin position="128"/>
        <end position="132"/>
    </location>
    <ligand>
        <name>5-phospho-alpha-D-ribose 1-diphosphate</name>
        <dbReference type="ChEBI" id="CHEBI:58017"/>
    </ligand>
</feature>
<feature type="binding site" evidence="1">
    <location>
        <position position="156"/>
    </location>
    <ligand>
        <name>xanthine</name>
        <dbReference type="ChEBI" id="CHEBI:17712"/>
    </ligand>
</feature>
<proteinExistence type="inferred from homology"/>
<protein>
    <recommendedName>
        <fullName evidence="1">Xanthine phosphoribosyltransferase</fullName>
        <shortName evidence="1">XPRTase</shortName>
        <ecNumber evidence="1">2.4.2.22</ecNumber>
    </recommendedName>
</protein>
<sequence>MKVLQEKILNEGKVLSGDVLKVDAFLNHQIDPVLMQEIGKEFAKRFKEENITKIVTIESSGIAPAVMAALELGVKVIFARKRKSLTLQDNMYVANVYSFTKQETNEISLSRNHIDESDRVLIIDDFLANGQAALGLMSLVEQAGASIAGIGIVIEKAFQDGGKKLREQGIRVESLAEIASLDNNAVTFVQQETAEVK</sequence>
<organism>
    <name type="scientific">Bacillus cereus (strain AH187)</name>
    <dbReference type="NCBI Taxonomy" id="405534"/>
    <lineage>
        <taxon>Bacteria</taxon>
        <taxon>Bacillati</taxon>
        <taxon>Bacillota</taxon>
        <taxon>Bacilli</taxon>
        <taxon>Bacillales</taxon>
        <taxon>Bacillaceae</taxon>
        <taxon>Bacillus</taxon>
        <taxon>Bacillus cereus group</taxon>
    </lineage>
</organism>